<keyword id="KW-0012">Acyltransferase</keyword>
<keyword id="KW-0028">Amino-acid biosynthesis</keyword>
<keyword id="KW-0963">Cytoplasm</keyword>
<keyword id="KW-0220">Diaminopimelate biosynthesis</keyword>
<keyword id="KW-0457">Lysine biosynthesis</keyword>
<keyword id="KW-0677">Repeat</keyword>
<keyword id="KW-0808">Transferase</keyword>
<accession>B3QCH6</accession>
<sequence length="281" mass="29734">MPLTALESTINAAFDARDTVTAATQGEIRQAVEDALDLLDQGKVRVAQRDASGAWTVNQWLKKAVLLSFRLNDMGVIAGGPGGANWWDKVPSKFEGWGENRFREAGFRAVPGAIVRRSAFIAKNAVLMPSFVNLGAYVDESTMVDTWATVGSCAQIGKRVHISGGAGIGGVLEPLQAGPVIIEDDCFIGARSEVAEGVIVRKGAVLAMGVFLGASTKIVDRETGEVFVGEVPEYAVLVPGTLPGKPMKNGAPGPATACAVIVKRVDERTRSKTSINELLRD</sequence>
<gene>
    <name evidence="1" type="primary">dapD</name>
    <name type="ordered locus">Rpal_0630</name>
</gene>
<evidence type="ECO:0000255" key="1">
    <source>
        <dbReference type="HAMAP-Rule" id="MF_00811"/>
    </source>
</evidence>
<organism>
    <name type="scientific">Rhodopseudomonas palustris (strain TIE-1)</name>
    <dbReference type="NCBI Taxonomy" id="395960"/>
    <lineage>
        <taxon>Bacteria</taxon>
        <taxon>Pseudomonadati</taxon>
        <taxon>Pseudomonadota</taxon>
        <taxon>Alphaproteobacteria</taxon>
        <taxon>Hyphomicrobiales</taxon>
        <taxon>Nitrobacteraceae</taxon>
        <taxon>Rhodopseudomonas</taxon>
    </lineage>
</organism>
<proteinExistence type="inferred from homology"/>
<dbReference type="EC" id="2.3.1.117" evidence="1"/>
<dbReference type="EMBL" id="CP001096">
    <property type="protein sequence ID" value="ACE99189.1"/>
    <property type="molecule type" value="Genomic_DNA"/>
</dbReference>
<dbReference type="RefSeq" id="WP_011156194.1">
    <property type="nucleotide sequence ID" value="NC_011004.1"/>
</dbReference>
<dbReference type="SMR" id="B3QCH6"/>
<dbReference type="GeneID" id="66891647"/>
<dbReference type="KEGG" id="rpt:Rpal_0630"/>
<dbReference type="HOGENOM" id="CLU_050859_0_1_5"/>
<dbReference type="OrthoDB" id="9775362at2"/>
<dbReference type="UniPathway" id="UPA00034">
    <property type="reaction ID" value="UER00019"/>
</dbReference>
<dbReference type="Proteomes" id="UP000001725">
    <property type="component" value="Chromosome"/>
</dbReference>
<dbReference type="GO" id="GO:0005737">
    <property type="term" value="C:cytoplasm"/>
    <property type="evidence" value="ECO:0007669"/>
    <property type="project" value="UniProtKB-SubCell"/>
</dbReference>
<dbReference type="GO" id="GO:0008666">
    <property type="term" value="F:2,3,4,5-tetrahydropyridine-2,6-dicarboxylate N-succinyltransferase activity"/>
    <property type="evidence" value="ECO:0007669"/>
    <property type="project" value="UniProtKB-UniRule"/>
</dbReference>
<dbReference type="GO" id="GO:0016779">
    <property type="term" value="F:nucleotidyltransferase activity"/>
    <property type="evidence" value="ECO:0007669"/>
    <property type="project" value="TreeGrafter"/>
</dbReference>
<dbReference type="GO" id="GO:0019877">
    <property type="term" value="P:diaminopimelate biosynthetic process"/>
    <property type="evidence" value="ECO:0007669"/>
    <property type="project" value="UniProtKB-UniRule"/>
</dbReference>
<dbReference type="GO" id="GO:0009089">
    <property type="term" value="P:lysine biosynthetic process via diaminopimelate"/>
    <property type="evidence" value="ECO:0007669"/>
    <property type="project" value="UniProtKB-UniRule"/>
</dbReference>
<dbReference type="CDD" id="cd03350">
    <property type="entry name" value="LbH_THP_succinylT"/>
    <property type="match status" value="1"/>
</dbReference>
<dbReference type="Gene3D" id="2.160.10.10">
    <property type="entry name" value="Hexapeptide repeat proteins"/>
    <property type="match status" value="1"/>
</dbReference>
<dbReference type="Gene3D" id="1.10.166.10">
    <property type="entry name" value="Tetrahydrodipicolinate-N-succinyltransferase, N-terminal domain"/>
    <property type="match status" value="1"/>
</dbReference>
<dbReference type="HAMAP" id="MF_00811">
    <property type="entry name" value="DapD"/>
    <property type="match status" value="1"/>
</dbReference>
<dbReference type="InterPro" id="IPR005664">
    <property type="entry name" value="DapD_Trfase_Hexpep_rpt_fam"/>
</dbReference>
<dbReference type="InterPro" id="IPR001451">
    <property type="entry name" value="Hexapep"/>
</dbReference>
<dbReference type="InterPro" id="IPR023180">
    <property type="entry name" value="THP_succinylTrfase_dom1"/>
</dbReference>
<dbReference type="InterPro" id="IPR037133">
    <property type="entry name" value="THP_succinylTrfase_N_sf"/>
</dbReference>
<dbReference type="InterPro" id="IPR011004">
    <property type="entry name" value="Trimer_LpxA-like_sf"/>
</dbReference>
<dbReference type="NCBIfam" id="TIGR00965">
    <property type="entry name" value="dapD"/>
    <property type="match status" value="1"/>
</dbReference>
<dbReference type="NCBIfam" id="NF008808">
    <property type="entry name" value="PRK11830.1"/>
    <property type="match status" value="1"/>
</dbReference>
<dbReference type="PANTHER" id="PTHR19136:SF52">
    <property type="entry name" value="2,3,4,5-TETRAHYDROPYRIDINE-2,6-DICARBOXYLATE N-SUCCINYLTRANSFERASE"/>
    <property type="match status" value="1"/>
</dbReference>
<dbReference type="PANTHER" id="PTHR19136">
    <property type="entry name" value="MOLYBDENUM COFACTOR GUANYLYLTRANSFERASE"/>
    <property type="match status" value="1"/>
</dbReference>
<dbReference type="Pfam" id="PF14602">
    <property type="entry name" value="Hexapep_2"/>
    <property type="match status" value="1"/>
</dbReference>
<dbReference type="Pfam" id="PF14805">
    <property type="entry name" value="THDPS_N_2"/>
    <property type="match status" value="1"/>
</dbReference>
<dbReference type="SUPFAM" id="SSF51161">
    <property type="entry name" value="Trimeric LpxA-like enzymes"/>
    <property type="match status" value="1"/>
</dbReference>
<feature type="chain" id="PRO_1000134062" description="2,3,4,5-tetrahydropyridine-2,6-dicarboxylate N-succinyltransferase">
    <location>
        <begin position="1"/>
        <end position="281"/>
    </location>
</feature>
<protein>
    <recommendedName>
        <fullName evidence="1">2,3,4,5-tetrahydropyridine-2,6-dicarboxylate N-succinyltransferase</fullName>
        <ecNumber evidence="1">2.3.1.117</ecNumber>
    </recommendedName>
    <alternativeName>
        <fullName evidence="1">Tetrahydrodipicolinate N-succinyltransferase</fullName>
        <shortName evidence="1">THP succinyltransferase</shortName>
        <shortName evidence="1">Tetrahydropicolinate succinylase</shortName>
    </alternativeName>
</protein>
<comment type="catalytic activity">
    <reaction evidence="1">
        <text>(S)-2,3,4,5-tetrahydrodipicolinate + succinyl-CoA + H2O = (S)-2-succinylamino-6-oxoheptanedioate + CoA</text>
        <dbReference type="Rhea" id="RHEA:17325"/>
        <dbReference type="ChEBI" id="CHEBI:15377"/>
        <dbReference type="ChEBI" id="CHEBI:15685"/>
        <dbReference type="ChEBI" id="CHEBI:16845"/>
        <dbReference type="ChEBI" id="CHEBI:57287"/>
        <dbReference type="ChEBI" id="CHEBI:57292"/>
        <dbReference type="EC" id="2.3.1.117"/>
    </reaction>
</comment>
<comment type="pathway">
    <text evidence="1">Amino-acid biosynthesis; L-lysine biosynthesis via DAP pathway; LL-2,6-diaminopimelate from (S)-tetrahydrodipicolinate (succinylase route): step 1/3.</text>
</comment>
<comment type="subcellular location">
    <subcellularLocation>
        <location evidence="1">Cytoplasm</location>
    </subcellularLocation>
</comment>
<comment type="similarity">
    <text evidence="1">Belongs to the transferase hexapeptide repeat family.</text>
</comment>
<name>DAPD_RHOPT</name>
<reference key="1">
    <citation type="submission" date="2008-05" db="EMBL/GenBank/DDBJ databases">
        <title>Complete sequence of Rhodopseudomonas palustris TIE-1.</title>
        <authorList>
            <consortium name="US DOE Joint Genome Institute"/>
            <person name="Lucas S."/>
            <person name="Copeland A."/>
            <person name="Lapidus A."/>
            <person name="Glavina del Rio T."/>
            <person name="Dalin E."/>
            <person name="Tice H."/>
            <person name="Pitluck S."/>
            <person name="Chain P."/>
            <person name="Malfatti S."/>
            <person name="Shin M."/>
            <person name="Vergez L."/>
            <person name="Lang D."/>
            <person name="Schmutz J."/>
            <person name="Larimer F."/>
            <person name="Land M."/>
            <person name="Hauser L."/>
            <person name="Kyrpides N."/>
            <person name="Mikhailova N."/>
            <person name="Emerson D."/>
            <person name="Newman D.K."/>
            <person name="Roden E."/>
            <person name="Richardson P."/>
        </authorList>
    </citation>
    <scope>NUCLEOTIDE SEQUENCE [LARGE SCALE GENOMIC DNA]</scope>
    <source>
        <strain>TIE-1</strain>
    </source>
</reference>